<dbReference type="EC" id="2.4.2.43" evidence="1"/>
<dbReference type="EMBL" id="CP000036">
    <property type="protein sequence ID" value="ABB66858.1"/>
    <property type="molecule type" value="Genomic_DNA"/>
</dbReference>
<dbReference type="RefSeq" id="WP_000844050.1">
    <property type="nucleotide sequence ID" value="NC_007613.1"/>
</dbReference>
<dbReference type="SMR" id="Q31YK0"/>
<dbReference type="CAZy" id="GT83">
    <property type="family name" value="Glycosyltransferase Family 83"/>
</dbReference>
<dbReference type="KEGG" id="sbo:SBO_2294"/>
<dbReference type="HOGENOM" id="CLU_019200_2_1_6"/>
<dbReference type="UniPathway" id="UPA00037"/>
<dbReference type="Proteomes" id="UP000007067">
    <property type="component" value="Chromosome"/>
</dbReference>
<dbReference type="GO" id="GO:0005886">
    <property type="term" value="C:plasma membrane"/>
    <property type="evidence" value="ECO:0007669"/>
    <property type="project" value="UniProtKB-SubCell"/>
</dbReference>
<dbReference type="GO" id="GO:0103015">
    <property type="term" value="F:4-amino-4-deoxy-L-arabinose transferase activity"/>
    <property type="evidence" value="ECO:0007669"/>
    <property type="project" value="UniProtKB-EC"/>
</dbReference>
<dbReference type="GO" id="GO:0000030">
    <property type="term" value="F:mannosyltransferase activity"/>
    <property type="evidence" value="ECO:0007669"/>
    <property type="project" value="InterPro"/>
</dbReference>
<dbReference type="GO" id="GO:0009245">
    <property type="term" value="P:lipid A biosynthetic process"/>
    <property type="evidence" value="ECO:0007669"/>
    <property type="project" value="UniProtKB-UniRule"/>
</dbReference>
<dbReference type="GO" id="GO:0009103">
    <property type="term" value="P:lipopolysaccharide biosynthetic process"/>
    <property type="evidence" value="ECO:0007669"/>
    <property type="project" value="UniProtKB-KW"/>
</dbReference>
<dbReference type="GO" id="GO:0006493">
    <property type="term" value="P:protein O-linked glycosylation"/>
    <property type="evidence" value="ECO:0007669"/>
    <property type="project" value="InterPro"/>
</dbReference>
<dbReference type="GO" id="GO:0010041">
    <property type="term" value="P:response to iron(III) ion"/>
    <property type="evidence" value="ECO:0007669"/>
    <property type="project" value="TreeGrafter"/>
</dbReference>
<dbReference type="HAMAP" id="MF_01165">
    <property type="entry name" value="ArnT_transfer"/>
    <property type="match status" value="1"/>
</dbReference>
<dbReference type="InterPro" id="IPR022839">
    <property type="entry name" value="ArnT_tfrase"/>
</dbReference>
<dbReference type="InterPro" id="IPR003342">
    <property type="entry name" value="Glyco_trans_39/83"/>
</dbReference>
<dbReference type="InterPro" id="IPR050297">
    <property type="entry name" value="LipidA_mod_glycosyltrf_83"/>
</dbReference>
<dbReference type="NCBIfam" id="NF009784">
    <property type="entry name" value="PRK13279.1"/>
    <property type="match status" value="1"/>
</dbReference>
<dbReference type="PANTHER" id="PTHR33908">
    <property type="entry name" value="MANNOSYLTRANSFERASE YKCB-RELATED"/>
    <property type="match status" value="1"/>
</dbReference>
<dbReference type="PANTHER" id="PTHR33908:SF3">
    <property type="entry name" value="UNDECAPRENYL PHOSPHATE-ALPHA-4-AMINO-4-DEOXY-L-ARABINOSE ARABINOSYL TRANSFERASE"/>
    <property type="match status" value="1"/>
</dbReference>
<dbReference type="Pfam" id="PF02366">
    <property type="entry name" value="PMT"/>
    <property type="match status" value="1"/>
</dbReference>
<evidence type="ECO:0000255" key="1">
    <source>
        <dbReference type="HAMAP-Rule" id="MF_01165"/>
    </source>
</evidence>
<comment type="function">
    <text evidence="1">Catalyzes the transfer of the L-Ara4N moiety of the glycolipid undecaprenyl phosphate-alpha-L-Ara4N to lipid A. The modified arabinose is attached to lipid A and is required for resistance to polymyxin and cationic antimicrobial peptides.</text>
</comment>
<comment type="catalytic activity">
    <reaction evidence="1">
        <text>4-amino-4-deoxy-alpha-L-arabinopyranosyl di-trans,octa-cis-undecaprenyl phosphate + lipid IVA = lipid IIA + di-trans,octa-cis-undecaprenyl phosphate.</text>
        <dbReference type="EC" id="2.4.2.43"/>
    </reaction>
</comment>
<comment type="pathway">
    <text evidence="1">Lipopolysaccharide metabolism; 4-amino-4-deoxy-beta-L-arabinose-lipid A biosynthesis.</text>
</comment>
<comment type="subcellular location">
    <subcellularLocation>
        <location evidence="1">Cell inner membrane</location>
        <topology evidence="1">Multi-pass membrane protein</topology>
    </subcellularLocation>
</comment>
<comment type="similarity">
    <text evidence="1">Belongs to the glycosyltransferase 83 family.</text>
</comment>
<proteinExistence type="inferred from homology"/>
<feature type="chain" id="PRO_0000380037" description="Undecaprenyl phosphate-alpha-4-amino-4-deoxy-L-arabinose arabinosyl transferase">
    <location>
        <begin position="1"/>
        <end position="550"/>
    </location>
</feature>
<feature type="transmembrane region" description="Helical" evidence="1">
    <location>
        <begin position="7"/>
        <end position="27"/>
    </location>
</feature>
<feature type="transmembrane region" description="Helical" evidence="1">
    <location>
        <begin position="81"/>
        <end position="101"/>
    </location>
</feature>
<feature type="transmembrane region" description="Helical" evidence="1">
    <location>
        <begin position="111"/>
        <end position="133"/>
    </location>
</feature>
<feature type="transmembrane region" description="Helical" evidence="1">
    <location>
        <begin position="137"/>
        <end position="154"/>
    </location>
</feature>
<feature type="transmembrane region" description="Helical" evidence="1">
    <location>
        <begin position="165"/>
        <end position="185"/>
    </location>
</feature>
<feature type="transmembrane region" description="Helical" evidence="1">
    <location>
        <begin position="204"/>
        <end position="224"/>
    </location>
</feature>
<feature type="transmembrane region" description="Helical" evidence="1">
    <location>
        <begin position="255"/>
        <end position="275"/>
    </location>
</feature>
<feature type="transmembrane region" description="Helical" evidence="1">
    <location>
        <begin position="288"/>
        <end position="308"/>
    </location>
</feature>
<feature type="transmembrane region" description="Helical" evidence="1">
    <location>
        <begin position="315"/>
        <end position="335"/>
    </location>
</feature>
<feature type="transmembrane region" description="Helical" evidence="1">
    <location>
        <begin position="346"/>
        <end position="366"/>
    </location>
</feature>
<feature type="transmembrane region" description="Helical" evidence="1">
    <location>
        <begin position="382"/>
        <end position="402"/>
    </location>
</feature>
<feature type="transmembrane region" description="Helical" evidence="1">
    <location>
        <begin position="406"/>
        <end position="426"/>
    </location>
</feature>
<protein>
    <recommendedName>
        <fullName evidence="1">Undecaprenyl phosphate-alpha-4-amino-4-deoxy-L-arabinose arabinosyl transferase</fullName>
        <ecNumber evidence="1">2.4.2.43</ecNumber>
    </recommendedName>
    <alternativeName>
        <fullName evidence="1">4-amino-4-deoxy-L-arabinose lipid A transferase</fullName>
    </alternativeName>
    <alternativeName>
        <fullName evidence="1">Lipid IV(A) 4-amino-4-deoxy-L-arabinosyltransferase</fullName>
    </alternativeName>
    <alternativeName>
        <fullName evidence="1">Undecaprenyl phosphate-alpha-L-Ara4N transferase</fullName>
    </alternativeName>
</protein>
<reference key="1">
    <citation type="journal article" date="2005" name="Nucleic Acids Res.">
        <title>Genome dynamics and diversity of Shigella species, the etiologic agents of bacillary dysentery.</title>
        <authorList>
            <person name="Yang F."/>
            <person name="Yang J."/>
            <person name="Zhang X."/>
            <person name="Chen L."/>
            <person name="Jiang Y."/>
            <person name="Yan Y."/>
            <person name="Tang X."/>
            <person name="Wang J."/>
            <person name="Xiong Z."/>
            <person name="Dong J."/>
            <person name="Xue Y."/>
            <person name="Zhu Y."/>
            <person name="Xu X."/>
            <person name="Sun L."/>
            <person name="Chen S."/>
            <person name="Nie H."/>
            <person name="Peng J."/>
            <person name="Xu J."/>
            <person name="Wang Y."/>
            <person name="Yuan Z."/>
            <person name="Wen Y."/>
            <person name="Yao Z."/>
            <person name="Shen Y."/>
            <person name="Qiang B."/>
            <person name="Hou Y."/>
            <person name="Yu J."/>
            <person name="Jin Q."/>
        </authorList>
    </citation>
    <scope>NUCLEOTIDE SEQUENCE [LARGE SCALE GENOMIC DNA]</scope>
    <source>
        <strain>Sb227</strain>
    </source>
</reference>
<gene>
    <name evidence="1" type="primary">arnT</name>
    <name type="ordered locus">SBO_2294</name>
</gene>
<keyword id="KW-0997">Cell inner membrane</keyword>
<keyword id="KW-1003">Cell membrane</keyword>
<keyword id="KW-0328">Glycosyltransferase</keyword>
<keyword id="KW-0441">Lipid A biosynthesis</keyword>
<keyword id="KW-0444">Lipid biosynthesis</keyword>
<keyword id="KW-0443">Lipid metabolism</keyword>
<keyword id="KW-0448">Lipopolysaccharide biosynthesis</keyword>
<keyword id="KW-0472">Membrane</keyword>
<keyword id="KW-0808">Transferase</keyword>
<keyword id="KW-0812">Transmembrane</keyword>
<keyword id="KW-1133">Transmembrane helix</keyword>
<accession>Q31YK0</accession>
<name>ARNT_SHIBS</name>
<sequence>MKSVRYLIGLFAFIACYYLLPISTRLLWQPDETRYAEISREMLASGDWIVPHLLGLRYFEKPIAGYWINSIGQWLFGANNFGVRAGVIFATLLTAALVTWFTLRLWRDKRLALLATVIYLSLFIVYAIGTYAVLDPFIAFWLVAGMCSFWLAMQAQTWKGKSAGFLLLGITCGMGVMTKGFLALAVPVLSVLPWVATQKRWKDLFIYGWLAVISCVLTVLPWGLAIAQREPDFWHYFFWVEHIQRFALDDAQHRAPFWYYVPVIIAGSLPWLGLLPGALYTGWKNRKHSATVYLLSWTIMPLLFFSVAKGKLPTYILSCFASLAMLMAHYALLAAKNNPLALRINGWINIAFGVTGIIATFVVSPWGPMNTPVWQTFESYKVFCAWSIFSLWAFFGWYTLTNVEKTWSFAALCPLGLALLVGFSIPDRVMEGKHPQFFVEMTQESLQPSRYILTDSVGVAAGLAWSLQRDDIIMYRQTGELKYGLNYPDAKGRFVSGDEFANWLNQHRQEGIITLVLSVDRDEDINSLAIPPADAIDRQERLVLIQYRPK</sequence>
<organism>
    <name type="scientific">Shigella boydii serotype 4 (strain Sb227)</name>
    <dbReference type="NCBI Taxonomy" id="300268"/>
    <lineage>
        <taxon>Bacteria</taxon>
        <taxon>Pseudomonadati</taxon>
        <taxon>Pseudomonadota</taxon>
        <taxon>Gammaproteobacteria</taxon>
        <taxon>Enterobacterales</taxon>
        <taxon>Enterobacteriaceae</taxon>
        <taxon>Shigella</taxon>
    </lineage>
</organism>